<organism>
    <name type="scientific">Staphylococcus aureus (strain COL)</name>
    <dbReference type="NCBI Taxonomy" id="93062"/>
    <lineage>
        <taxon>Bacteria</taxon>
        <taxon>Bacillati</taxon>
        <taxon>Bacillota</taxon>
        <taxon>Bacilli</taxon>
        <taxon>Bacillales</taxon>
        <taxon>Staphylococcaceae</taxon>
        <taxon>Staphylococcus</taxon>
    </lineage>
</organism>
<comment type="function">
    <text evidence="1">Functions in the biosynthesis of branched-chain amino acids. Catalyzes the dehydration of (2R,3R)-2,3-dihydroxy-3-methylpentanoate (2,3-dihydroxy-3-methylvalerate) into 2-oxo-3-methylpentanoate (2-oxo-3-methylvalerate) and of (2R)-2,3-dihydroxy-3-methylbutanoate (2,3-dihydroxyisovalerate) into 2-oxo-3-methylbutanoate (2-oxoisovalerate), the penultimate precursor to L-isoleucine and L-valine, respectively.</text>
</comment>
<comment type="catalytic activity">
    <reaction evidence="1">
        <text>(2R)-2,3-dihydroxy-3-methylbutanoate = 3-methyl-2-oxobutanoate + H2O</text>
        <dbReference type="Rhea" id="RHEA:24809"/>
        <dbReference type="ChEBI" id="CHEBI:11851"/>
        <dbReference type="ChEBI" id="CHEBI:15377"/>
        <dbReference type="ChEBI" id="CHEBI:49072"/>
        <dbReference type="EC" id="4.2.1.9"/>
    </reaction>
    <physiologicalReaction direction="left-to-right" evidence="1">
        <dbReference type="Rhea" id="RHEA:24810"/>
    </physiologicalReaction>
</comment>
<comment type="catalytic activity">
    <reaction evidence="1">
        <text>(2R,3R)-2,3-dihydroxy-3-methylpentanoate = (S)-3-methyl-2-oxopentanoate + H2O</text>
        <dbReference type="Rhea" id="RHEA:27694"/>
        <dbReference type="ChEBI" id="CHEBI:15377"/>
        <dbReference type="ChEBI" id="CHEBI:35146"/>
        <dbReference type="ChEBI" id="CHEBI:49258"/>
        <dbReference type="EC" id="4.2.1.9"/>
    </reaction>
    <physiologicalReaction direction="left-to-right" evidence="1">
        <dbReference type="Rhea" id="RHEA:27695"/>
    </physiologicalReaction>
</comment>
<comment type="cofactor">
    <cofactor evidence="1">
        <name>[2Fe-2S] cluster</name>
        <dbReference type="ChEBI" id="CHEBI:190135"/>
    </cofactor>
    <text evidence="1">Binds 1 [2Fe-2S] cluster per subunit. This cluster acts as a Lewis acid cofactor.</text>
</comment>
<comment type="cofactor">
    <cofactor evidence="1">
        <name>Mg(2+)</name>
        <dbReference type="ChEBI" id="CHEBI:18420"/>
    </cofactor>
</comment>
<comment type="pathway">
    <text evidence="1">Amino-acid biosynthesis; L-isoleucine biosynthesis; L-isoleucine from 2-oxobutanoate: step 3/4.</text>
</comment>
<comment type="pathway">
    <text evidence="1">Amino-acid biosynthesis; L-valine biosynthesis; L-valine from pyruvate: step 3/4.</text>
</comment>
<comment type="subunit">
    <text evidence="1">Homodimer.</text>
</comment>
<comment type="similarity">
    <text evidence="1">Belongs to the IlvD/Edd family.</text>
</comment>
<sequence>MRSDMIKKGDHQAPARSLLHATGALKSPTDMNKPFVAICNSYIDIVPGHVHLRELADIAKEAIREAGAIPFEFNTIGVDDGIAMGHIGMRYSLPSREIIADAAETVINAHWFDGVFYIPNCDKITPGMILAAMRTNVPAIFCSGGPMKAGLSAHGKALTLSSMFEAVGAFKEGSISKEEFLDMEQNACPTCGSCAGMFTANSMNCLMEVLGLALPYNGTALAVSDQRREMIRQAAFKLVENIKNDLKPRDIVTREAIDDAFALDMAMGGSTNTVLHTLAIANEAGIDYDLERINAIAKRTPYLSKIAPSSSYSMHDVHEAGGVPAIINELMKKDGTLHPDRITVTGKTLRENNEGKEIKNFDVIHPLDAPYDAQGGLSILFGNIAPKGAVIKVGGVDPSIKTFTRKAICFNSHDEAVEAIDNRTVRAGHVVVIRYEGPKGGPGMPEMLAPTSSIVGRGLGKDVALITDGRFSGATRGIAVGHISPEAASGGPIALIEDGDEITIDLTNRTLNVNQPEDVLARRRESLTPFKAKVKTGYLARYTALVTSANTGGVMQVPENLI</sequence>
<keyword id="KW-0001">2Fe-2S</keyword>
<keyword id="KW-0028">Amino-acid biosynthesis</keyword>
<keyword id="KW-0100">Branched-chain amino acid biosynthesis</keyword>
<keyword id="KW-0408">Iron</keyword>
<keyword id="KW-0411">Iron-sulfur</keyword>
<keyword id="KW-0456">Lyase</keyword>
<keyword id="KW-0460">Magnesium</keyword>
<keyword id="KW-0479">Metal-binding</keyword>
<proteinExistence type="inferred from homology"/>
<dbReference type="EC" id="4.2.1.9" evidence="1"/>
<dbReference type="EMBL" id="CP000046">
    <property type="protein sequence ID" value="AAW37005.1"/>
    <property type="molecule type" value="Genomic_DNA"/>
</dbReference>
<dbReference type="RefSeq" id="WP_001255782.1">
    <property type="nucleotide sequence ID" value="NZ_JBGOFO010000006.1"/>
</dbReference>
<dbReference type="SMR" id="Q5HEE8"/>
<dbReference type="KEGG" id="sac:SACOL2042"/>
<dbReference type="HOGENOM" id="CLU_014271_4_2_9"/>
<dbReference type="UniPathway" id="UPA00047">
    <property type="reaction ID" value="UER00057"/>
</dbReference>
<dbReference type="UniPathway" id="UPA00049">
    <property type="reaction ID" value="UER00061"/>
</dbReference>
<dbReference type="Proteomes" id="UP000000530">
    <property type="component" value="Chromosome"/>
</dbReference>
<dbReference type="GO" id="GO:0005829">
    <property type="term" value="C:cytosol"/>
    <property type="evidence" value="ECO:0007669"/>
    <property type="project" value="TreeGrafter"/>
</dbReference>
<dbReference type="GO" id="GO:0051537">
    <property type="term" value="F:2 iron, 2 sulfur cluster binding"/>
    <property type="evidence" value="ECO:0007669"/>
    <property type="project" value="UniProtKB-UniRule"/>
</dbReference>
<dbReference type="GO" id="GO:0004160">
    <property type="term" value="F:dihydroxy-acid dehydratase activity"/>
    <property type="evidence" value="ECO:0007669"/>
    <property type="project" value="UniProtKB-UniRule"/>
</dbReference>
<dbReference type="GO" id="GO:0000287">
    <property type="term" value="F:magnesium ion binding"/>
    <property type="evidence" value="ECO:0007669"/>
    <property type="project" value="UniProtKB-UniRule"/>
</dbReference>
<dbReference type="GO" id="GO:0009097">
    <property type="term" value="P:isoleucine biosynthetic process"/>
    <property type="evidence" value="ECO:0007669"/>
    <property type="project" value="UniProtKB-UniRule"/>
</dbReference>
<dbReference type="GO" id="GO:0009099">
    <property type="term" value="P:L-valine biosynthetic process"/>
    <property type="evidence" value="ECO:0007669"/>
    <property type="project" value="UniProtKB-UniRule"/>
</dbReference>
<dbReference type="FunFam" id="3.50.30.80:FF:000001">
    <property type="entry name" value="Dihydroxy-acid dehydratase"/>
    <property type="match status" value="1"/>
</dbReference>
<dbReference type="Gene3D" id="3.50.30.80">
    <property type="entry name" value="IlvD/EDD C-terminal domain-like"/>
    <property type="match status" value="1"/>
</dbReference>
<dbReference type="HAMAP" id="MF_00012">
    <property type="entry name" value="IlvD"/>
    <property type="match status" value="1"/>
</dbReference>
<dbReference type="InterPro" id="IPR042096">
    <property type="entry name" value="Dihydro-acid_dehy_C"/>
</dbReference>
<dbReference type="InterPro" id="IPR004404">
    <property type="entry name" value="DihydroxyA_deHydtase"/>
</dbReference>
<dbReference type="InterPro" id="IPR020558">
    <property type="entry name" value="DiOHA_6PGluconate_deHydtase_CS"/>
</dbReference>
<dbReference type="InterPro" id="IPR056740">
    <property type="entry name" value="ILV_EDD_C"/>
</dbReference>
<dbReference type="InterPro" id="IPR000581">
    <property type="entry name" value="ILV_EDD_N"/>
</dbReference>
<dbReference type="InterPro" id="IPR037237">
    <property type="entry name" value="IlvD/EDD_N"/>
</dbReference>
<dbReference type="NCBIfam" id="TIGR00110">
    <property type="entry name" value="ilvD"/>
    <property type="match status" value="1"/>
</dbReference>
<dbReference type="NCBIfam" id="NF002068">
    <property type="entry name" value="PRK00911.1"/>
    <property type="match status" value="1"/>
</dbReference>
<dbReference type="PANTHER" id="PTHR43661">
    <property type="entry name" value="D-XYLONATE DEHYDRATASE"/>
    <property type="match status" value="1"/>
</dbReference>
<dbReference type="PANTHER" id="PTHR43661:SF3">
    <property type="entry name" value="D-XYLONATE DEHYDRATASE YAGF-RELATED"/>
    <property type="match status" value="1"/>
</dbReference>
<dbReference type="Pfam" id="PF24877">
    <property type="entry name" value="ILV_EDD_C"/>
    <property type="match status" value="1"/>
</dbReference>
<dbReference type="Pfam" id="PF00920">
    <property type="entry name" value="ILVD_EDD_N"/>
    <property type="match status" value="1"/>
</dbReference>
<dbReference type="SUPFAM" id="SSF143975">
    <property type="entry name" value="IlvD/EDD N-terminal domain-like"/>
    <property type="match status" value="1"/>
</dbReference>
<dbReference type="SUPFAM" id="SSF52016">
    <property type="entry name" value="LeuD/IlvD-like"/>
    <property type="match status" value="1"/>
</dbReference>
<dbReference type="PROSITE" id="PS00886">
    <property type="entry name" value="ILVD_EDD_1"/>
    <property type="match status" value="1"/>
</dbReference>
<dbReference type="PROSITE" id="PS00887">
    <property type="entry name" value="ILVD_EDD_2"/>
    <property type="match status" value="1"/>
</dbReference>
<feature type="chain" id="PRO_0000103505" description="Dihydroxy-acid dehydratase">
    <location>
        <begin position="1"/>
        <end position="562"/>
    </location>
</feature>
<feature type="active site" description="Proton acceptor" evidence="1">
    <location>
        <position position="472"/>
    </location>
</feature>
<feature type="binding site" evidence="1">
    <location>
        <position position="80"/>
    </location>
    <ligand>
        <name>Mg(2+)</name>
        <dbReference type="ChEBI" id="CHEBI:18420"/>
    </ligand>
</feature>
<feature type="binding site" evidence="1">
    <location>
        <position position="121"/>
    </location>
    <ligand>
        <name>[2Fe-2S] cluster</name>
        <dbReference type="ChEBI" id="CHEBI:190135"/>
    </ligand>
</feature>
<feature type="binding site" evidence="1">
    <location>
        <position position="122"/>
    </location>
    <ligand>
        <name>Mg(2+)</name>
        <dbReference type="ChEBI" id="CHEBI:18420"/>
    </ligand>
</feature>
<feature type="binding site" description="via carbamate group" evidence="1">
    <location>
        <position position="123"/>
    </location>
    <ligand>
        <name>Mg(2+)</name>
        <dbReference type="ChEBI" id="CHEBI:18420"/>
    </ligand>
</feature>
<feature type="binding site" evidence="1">
    <location>
        <position position="194"/>
    </location>
    <ligand>
        <name>[2Fe-2S] cluster</name>
        <dbReference type="ChEBI" id="CHEBI:190135"/>
    </ligand>
</feature>
<feature type="binding site" evidence="1">
    <location>
        <position position="446"/>
    </location>
    <ligand>
        <name>Mg(2+)</name>
        <dbReference type="ChEBI" id="CHEBI:18420"/>
    </ligand>
</feature>
<feature type="modified residue" description="N6-carboxylysine" evidence="1">
    <location>
        <position position="123"/>
    </location>
</feature>
<protein>
    <recommendedName>
        <fullName evidence="1">Dihydroxy-acid dehydratase</fullName>
        <shortName evidence="1">DAD</shortName>
        <ecNumber evidence="1">4.2.1.9</ecNumber>
    </recommendedName>
</protein>
<reference key="1">
    <citation type="journal article" date="2005" name="J. Bacteriol.">
        <title>Insights on evolution of virulence and resistance from the complete genome analysis of an early methicillin-resistant Staphylococcus aureus strain and a biofilm-producing methicillin-resistant Staphylococcus epidermidis strain.</title>
        <authorList>
            <person name="Gill S.R."/>
            <person name="Fouts D.E."/>
            <person name="Archer G.L."/>
            <person name="Mongodin E.F."/>
            <person name="DeBoy R.T."/>
            <person name="Ravel J."/>
            <person name="Paulsen I.T."/>
            <person name="Kolonay J.F."/>
            <person name="Brinkac L.M."/>
            <person name="Beanan M.J."/>
            <person name="Dodson R.J."/>
            <person name="Daugherty S.C."/>
            <person name="Madupu R."/>
            <person name="Angiuoli S.V."/>
            <person name="Durkin A.S."/>
            <person name="Haft D.H."/>
            <person name="Vamathevan J.J."/>
            <person name="Khouri H."/>
            <person name="Utterback T.R."/>
            <person name="Lee C."/>
            <person name="Dimitrov G."/>
            <person name="Jiang L."/>
            <person name="Qin H."/>
            <person name="Weidman J."/>
            <person name="Tran K."/>
            <person name="Kang K.H."/>
            <person name="Hance I.R."/>
            <person name="Nelson K.E."/>
            <person name="Fraser C.M."/>
        </authorList>
    </citation>
    <scope>NUCLEOTIDE SEQUENCE [LARGE SCALE GENOMIC DNA]</scope>
    <source>
        <strain>COL</strain>
    </source>
</reference>
<gene>
    <name evidence="1" type="primary">ilvD</name>
    <name type="ordered locus">SACOL2042</name>
</gene>
<evidence type="ECO:0000255" key="1">
    <source>
        <dbReference type="HAMAP-Rule" id="MF_00012"/>
    </source>
</evidence>
<accession>Q5HEE8</accession>
<name>ILVD_STAAC</name>